<name>TIG_STRZJ</name>
<proteinExistence type="inferred from homology"/>
<organism>
    <name type="scientific">Streptococcus pneumoniae (strain JJA)</name>
    <dbReference type="NCBI Taxonomy" id="488222"/>
    <lineage>
        <taxon>Bacteria</taxon>
        <taxon>Bacillati</taxon>
        <taxon>Bacillota</taxon>
        <taxon>Bacilli</taxon>
        <taxon>Lactobacillales</taxon>
        <taxon>Streptococcaceae</taxon>
        <taxon>Streptococcus</taxon>
    </lineage>
</organism>
<dbReference type="EC" id="5.2.1.8" evidence="1"/>
<dbReference type="EMBL" id="CP000919">
    <property type="protein sequence ID" value="ACO18753.1"/>
    <property type="molecule type" value="Genomic_DNA"/>
</dbReference>
<dbReference type="RefSeq" id="WP_000116480.1">
    <property type="nucleotide sequence ID" value="NC_012466.1"/>
</dbReference>
<dbReference type="SMR" id="C1CCG7"/>
<dbReference type="KEGG" id="sjj:SPJ_0388"/>
<dbReference type="HOGENOM" id="CLU_033058_3_2_9"/>
<dbReference type="Proteomes" id="UP000002206">
    <property type="component" value="Chromosome"/>
</dbReference>
<dbReference type="GO" id="GO:0005737">
    <property type="term" value="C:cytoplasm"/>
    <property type="evidence" value="ECO:0007669"/>
    <property type="project" value="UniProtKB-SubCell"/>
</dbReference>
<dbReference type="GO" id="GO:0003755">
    <property type="term" value="F:peptidyl-prolyl cis-trans isomerase activity"/>
    <property type="evidence" value="ECO:0007669"/>
    <property type="project" value="UniProtKB-UniRule"/>
</dbReference>
<dbReference type="GO" id="GO:0044183">
    <property type="term" value="F:protein folding chaperone"/>
    <property type="evidence" value="ECO:0007669"/>
    <property type="project" value="TreeGrafter"/>
</dbReference>
<dbReference type="GO" id="GO:0043022">
    <property type="term" value="F:ribosome binding"/>
    <property type="evidence" value="ECO:0007669"/>
    <property type="project" value="TreeGrafter"/>
</dbReference>
<dbReference type="GO" id="GO:0051083">
    <property type="term" value="P:'de novo' cotranslational protein folding"/>
    <property type="evidence" value="ECO:0007669"/>
    <property type="project" value="TreeGrafter"/>
</dbReference>
<dbReference type="GO" id="GO:0051301">
    <property type="term" value="P:cell division"/>
    <property type="evidence" value="ECO:0007669"/>
    <property type="project" value="UniProtKB-KW"/>
</dbReference>
<dbReference type="GO" id="GO:0061077">
    <property type="term" value="P:chaperone-mediated protein folding"/>
    <property type="evidence" value="ECO:0007669"/>
    <property type="project" value="TreeGrafter"/>
</dbReference>
<dbReference type="GO" id="GO:0015031">
    <property type="term" value="P:protein transport"/>
    <property type="evidence" value="ECO:0007669"/>
    <property type="project" value="UniProtKB-UniRule"/>
</dbReference>
<dbReference type="GO" id="GO:0043335">
    <property type="term" value="P:protein unfolding"/>
    <property type="evidence" value="ECO:0007669"/>
    <property type="project" value="TreeGrafter"/>
</dbReference>
<dbReference type="FunFam" id="3.10.50.40:FF:000001">
    <property type="entry name" value="Trigger factor"/>
    <property type="match status" value="1"/>
</dbReference>
<dbReference type="Gene3D" id="3.10.50.40">
    <property type="match status" value="1"/>
</dbReference>
<dbReference type="Gene3D" id="3.30.70.1050">
    <property type="entry name" value="Trigger factor ribosome-binding domain"/>
    <property type="match status" value="1"/>
</dbReference>
<dbReference type="Gene3D" id="1.10.3120.10">
    <property type="entry name" value="Trigger factor, C-terminal domain"/>
    <property type="match status" value="1"/>
</dbReference>
<dbReference type="HAMAP" id="MF_00303">
    <property type="entry name" value="Trigger_factor_Tig"/>
    <property type="match status" value="1"/>
</dbReference>
<dbReference type="InterPro" id="IPR046357">
    <property type="entry name" value="PPIase_dom_sf"/>
</dbReference>
<dbReference type="InterPro" id="IPR001179">
    <property type="entry name" value="PPIase_FKBP_dom"/>
</dbReference>
<dbReference type="InterPro" id="IPR005215">
    <property type="entry name" value="Trig_fac"/>
</dbReference>
<dbReference type="InterPro" id="IPR008880">
    <property type="entry name" value="Trigger_fac_C"/>
</dbReference>
<dbReference type="InterPro" id="IPR037041">
    <property type="entry name" value="Trigger_fac_C_sf"/>
</dbReference>
<dbReference type="InterPro" id="IPR008881">
    <property type="entry name" value="Trigger_fac_ribosome-bd_bac"/>
</dbReference>
<dbReference type="InterPro" id="IPR036611">
    <property type="entry name" value="Trigger_fac_ribosome-bd_sf"/>
</dbReference>
<dbReference type="InterPro" id="IPR027304">
    <property type="entry name" value="Trigger_fact/SurA_dom_sf"/>
</dbReference>
<dbReference type="NCBIfam" id="TIGR00115">
    <property type="entry name" value="tig"/>
    <property type="match status" value="1"/>
</dbReference>
<dbReference type="PANTHER" id="PTHR30560">
    <property type="entry name" value="TRIGGER FACTOR CHAPERONE AND PEPTIDYL-PROLYL CIS/TRANS ISOMERASE"/>
    <property type="match status" value="1"/>
</dbReference>
<dbReference type="PANTHER" id="PTHR30560:SF3">
    <property type="entry name" value="TRIGGER FACTOR-LIKE PROTEIN TIG, CHLOROPLASTIC"/>
    <property type="match status" value="1"/>
</dbReference>
<dbReference type="Pfam" id="PF00254">
    <property type="entry name" value="FKBP_C"/>
    <property type="match status" value="1"/>
</dbReference>
<dbReference type="Pfam" id="PF05698">
    <property type="entry name" value="Trigger_C"/>
    <property type="match status" value="1"/>
</dbReference>
<dbReference type="Pfam" id="PF05697">
    <property type="entry name" value="Trigger_N"/>
    <property type="match status" value="1"/>
</dbReference>
<dbReference type="PIRSF" id="PIRSF003095">
    <property type="entry name" value="Trigger_factor"/>
    <property type="match status" value="1"/>
</dbReference>
<dbReference type="SUPFAM" id="SSF54534">
    <property type="entry name" value="FKBP-like"/>
    <property type="match status" value="1"/>
</dbReference>
<dbReference type="SUPFAM" id="SSF109998">
    <property type="entry name" value="Triger factor/SurA peptide-binding domain-like"/>
    <property type="match status" value="1"/>
</dbReference>
<dbReference type="SUPFAM" id="SSF102735">
    <property type="entry name" value="Trigger factor ribosome-binding domain"/>
    <property type="match status" value="1"/>
</dbReference>
<dbReference type="PROSITE" id="PS50059">
    <property type="entry name" value="FKBP_PPIASE"/>
    <property type="match status" value="1"/>
</dbReference>
<sequence length="427" mass="47312">MSVSFENKETNRGVLTFTISQDQIKPELDRVFKSVKKSLNVPGFRKGHLPRPIFDQKFGEESLYQDVMNALLPNAYEAAVKEAGLEVVAQPKIDVTSMEKGQDWVITAEVVTKPEVKLGDYKNLEVSVDVEKEVTDADVEERIERERNNLAELVIKEAAAENGDTVVIDFVGSIDGVEFDGGKGENFSLGLGSGQFIPGFEDQLVGHSAGETVDVIVTFPEDYQAEDLAGKEAKFVTTIHEVKAKEVPALDDELAKDIDEEVETLADLKEKYRKELAAAKEEAYKDAVEGAAIDTAVENAEIVELPEEMIHEEVHRSVNEFLGNLQRQGINPDMYFQITGTTQEDLHNQYQAEAESRTKTNLVIEAVAKAEGFDASEEEIQKEVEQLAADYNMEVAQVQNLLSADMLKHDITIKKAVELITSTATVK</sequence>
<comment type="function">
    <text evidence="1">Involved in protein export. Acts as a chaperone by maintaining the newly synthesized protein in an open conformation. Functions as a peptidyl-prolyl cis-trans isomerase.</text>
</comment>
<comment type="catalytic activity">
    <reaction evidence="1">
        <text>[protein]-peptidylproline (omega=180) = [protein]-peptidylproline (omega=0)</text>
        <dbReference type="Rhea" id="RHEA:16237"/>
        <dbReference type="Rhea" id="RHEA-COMP:10747"/>
        <dbReference type="Rhea" id="RHEA-COMP:10748"/>
        <dbReference type="ChEBI" id="CHEBI:83833"/>
        <dbReference type="ChEBI" id="CHEBI:83834"/>
        <dbReference type="EC" id="5.2.1.8"/>
    </reaction>
</comment>
<comment type="subcellular location">
    <subcellularLocation>
        <location>Cytoplasm</location>
    </subcellularLocation>
    <text evidence="1">About half TF is bound to the ribosome near the polypeptide exit tunnel while the other half is free in the cytoplasm.</text>
</comment>
<comment type="domain">
    <text evidence="1">Consists of 3 domains; the N-terminus binds the ribosome, the middle domain has PPIase activity, while the C-terminus has intrinsic chaperone activity on its own.</text>
</comment>
<comment type="similarity">
    <text evidence="1">Belongs to the FKBP-type PPIase family. Tig subfamily.</text>
</comment>
<keyword id="KW-0131">Cell cycle</keyword>
<keyword id="KW-0132">Cell division</keyword>
<keyword id="KW-0143">Chaperone</keyword>
<keyword id="KW-0963">Cytoplasm</keyword>
<keyword id="KW-0413">Isomerase</keyword>
<keyword id="KW-0697">Rotamase</keyword>
<feature type="chain" id="PRO_1000198180" description="Trigger factor">
    <location>
        <begin position="1"/>
        <end position="427"/>
    </location>
</feature>
<feature type="domain" description="PPIase FKBP-type" evidence="1">
    <location>
        <begin position="163"/>
        <end position="248"/>
    </location>
</feature>
<protein>
    <recommendedName>
        <fullName evidence="1">Trigger factor</fullName>
        <shortName evidence="1">TF</shortName>
        <ecNumber evidence="1">5.2.1.8</ecNumber>
    </recommendedName>
    <alternativeName>
        <fullName evidence="1">PPIase</fullName>
    </alternativeName>
</protein>
<accession>C1CCG7</accession>
<reference key="1">
    <citation type="journal article" date="2010" name="Genome Biol.">
        <title>Structure and dynamics of the pan-genome of Streptococcus pneumoniae and closely related species.</title>
        <authorList>
            <person name="Donati C."/>
            <person name="Hiller N.L."/>
            <person name="Tettelin H."/>
            <person name="Muzzi A."/>
            <person name="Croucher N.J."/>
            <person name="Angiuoli S.V."/>
            <person name="Oggioni M."/>
            <person name="Dunning Hotopp J.C."/>
            <person name="Hu F.Z."/>
            <person name="Riley D.R."/>
            <person name="Covacci A."/>
            <person name="Mitchell T.J."/>
            <person name="Bentley S.D."/>
            <person name="Kilian M."/>
            <person name="Ehrlich G.D."/>
            <person name="Rappuoli R."/>
            <person name="Moxon E.R."/>
            <person name="Masignani V."/>
        </authorList>
    </citation>
    <scope>NUCLEOTIDE SEQUENCE [LARGE SCALE GENOMIC DNA]</scope>
    <source>
        <strain>JJA</strain>
    </source>
</reference>
<gene>
    <name evidence="1" type="primary">tig</name>
    <name type="ordered locus">SPJ_0388</name>
</gene>
<evidence type="ECO:0000255" key="1">
    <source>
        <dbReference type="HAMAP-Rule" id="MF_00303"/>
    </source>
</evidence>